<feature type="chain" id="PRO_0000367144" description="Spastin">
    <location>
        <begin position="1"/>
        <end position="758"/>
    </location>
</feature>
<feature type="topological domain" description="Cytoplasmic" evidence="2">
    <location>
        <begin position="1"/>
        <end position="121"/>
    </location>
</feature>
<feature type="intramembrane region" description="Helical" evidence="2">
    <location>
        <begin position="122"/>
        <end position="142"/>
    </location>
</feature>
<feature type="topological domain" description="Cytoplasmic" evidence="2">
    <location>
        <begin position="143"/>
        <end position="758"/>
    </location>
</feature>
<feature type="domain" description="MIT" evidence="1">
    <location>
        <begin position="233"/>
        <end position="308"/>
    </location>
</feature>
<feature type="region of interest" description="Required for localization to punctate cytoplasmic foci">
    <location>
        <begin position="1"/>
        <end position="210"/>
    </location>
</feature>
<feature type="region of interest" description="Interaction with atl" evidence="12">
    <location>
        <begin position="1"/>
        <end position="159"/>
    </location>
</feature>
<feature type="region of interest" description="Disordered" evidence="3">
    <location>
        <begin position="1"/>
        <end position="103"/>
    </location>
</feature>
<feature type="region of interest" description="Disordered" evidence="3">
    <location>
        <begin position="169"/>
        <end position="202"/>
    </location>
</feature>
<feature type="region of interest" description="Sufficient for interaction with microtubules and microtubule severing" evidence="7 10">
    <location>
        <begin position="208"/>
        <end position="758"/>
    </location>
</feature>
<feature type="region of interest" description="Disordered" evidence="3">
    <location>
        <begin position="353"/>
        <end position="454"/>
    </location>
</feature>
<feature type="region of interest" description="Required for interaction with microtubules" evidence="10">
    <location>
        <begin position="443"/>
        <end position="455"/>
    </location>
</feature>
<feature type="compositionally biased region" description="Low complexity" evidence="3">
    <location>
        <begin position="8"/>
        <end position="28"/>
    </location>
</feature>
<feature type="compositionally biased region" description="Low complexity" evidence="3">
    <location>
        <begin position="43"/>
        <end position="58"/>
    </location>
</feature>
<feature type="compositionally biased region" description="Low complexity" evidence="3">
    <location>
        <begin position="66"/>
        <end position="76"/>
    </location>
</feature>
<feature type="compositionally biased region" description="Low complexity" evidence="3">
    <location>
        <begin position="85"/>
        <end position="95"/>
    </location>
</feature>
<feature type="compositionally biased region" description="Polar residues" evidence="3">
    <location>
        <begin position="169"/>
        <end position="180"/>
    </location>
</feature>
<feature type="compositionally biased region" description="Polar residues" evidence="3">
    <location>
        <begin position="189"/>
        <end position="198"/>
    </location>
</feature>
<feature type="compositionally biased region" description="Polar residues" evidence="3">
    <location>
        <begin position="390"/>
        <end position="406"/>
    </location>
</feature>
<feature type="compositionally biased region" description="Polar residues" evidence="3">
    <location>
        <begin position="425"/>
        <end position="454"/>
    </location>
</feature>
<feature type="binding site" evidence="2">
    <location>
        <begin position="523"/>
        <end position="530"/>
    </location>
    <ligand>
        <name>ATP</name>
        <dbReference type="ChEBI" id="CHEBI:30616"/>
    </ligand>
</feature>
<feature type="modified residue" description="Phosphothreonine" evidence="11">
    <location>
        <position position="439"/>
    </location>
</feature>
<feature type="mutagenesis site" description="Strongly impairs microtubule severing and weakly impairs ATPase activity; when associated with A-471 and A-472." evidence="10">
    <original>L</original>
    <variation>A</variation>
    <location>
        <position position="465"/>
    </location>
</feature>
<feature type="mutagenesis site" description="Strongly impairs microtubule severing and weakly impairs ATPase activity." evidence="10">
    <original>L</original>
    <variation>F</variation>
    <location>
        <position position="465"/>
    </location>
</feature>
<feature type="mutagenesis site" description="Strongly impairs microtubule severing and ATPase activity but does not affect interaction with microtubules; when associated with A-473 and A-474." evidence="10">
    <original>I</original>
    <variation>A</variation>
    <location>
        <position position="469"/>
    </location>
</feature>
<feature type="mutagenesis site" description="Strongly impairs microtubule severing and weakly impairs ATPase activity; when associated with A-465 and A-472." evidence="10">
    <original>D</original>
    <variation>A</variation>
    <location>
        <position position="471"/>
    </location>
</feature>
<feature type="mutagenesis site" description="Strongly impairs microtubule severing and weakly impairs ATPase activity; when associated with A-465 and A-471." evidence="10">
    <original>E</original>
    <variation>A</variation>
    <location>
        <position position="472"/>
    </location>
</feature>
<feature type="mutagenesis site" description="Strongly impairs microtubule severing and ATPase activity but does not affect interaction with microtubules; when associated with A-469 and A-474." evidence="10">
    <original>I</original>
    <variation>A</variation>
    <location>
        <position position="473"/>
    </location>
</feature>
<feature type="mutagenesis site" description="Strongly impairs microtubule severing and ATPase activity but does not affect interaction with microtubules; when associated with A-469 and A-473." evidence="10">
    <original>V</original>
    <variation>A</variation>
    <location>
        <position position="474"/>
    </location>
</feature>
<feature type="mutagenesis site" description="Impairs microtubule severing and ATPase activity." evidence="7">
    <original>S</original>
    <variation>C</variation>
    <location>
        <position position="503"/>
    </location>
</feature>
<feature type="mutagenesis site" description="Abrogates microtubule severing and strongly impairs ATPase activity." evidence="10">
    <original>G</original>
    <variation>R</variation>
    <location>
        <position position="511"/>
    </location>
</feature>
<feature type="mutagenesis site" description="Abrogates microtubule severing and ATPase activity. Induces accumulation of hyperstable microtubules at the neuromuscular junction presynpatic terminal and reduces synaptic area. Reduces adult lifespan and impairs climbing activity." evidence="7 8 14">
    <original>K</original>
    <variation>R</variation>
    <location>
        <position position="529"/>
    </location>
</feature>
<feature type="mutagenesis site" description="Abrogates microtubule severing." evidence="10">
    <original>K</original>
    <variation>A</variation>
    <location>
        <position position="555"/>
    </location>
</feature>
<feature type="mutagenesis site" description="Abrogates microtubule severing." evidence="10">
    <original>Y</original>
    <variation>A</variation>
    <location>
        <position position="556"/>
    </location>
</feature>
<feature type="mutagenesis site" description="Abrogates microtubule severing and impairs ATPase activity." evidence="10">
    <original>V</original>
    <variation>A</variation>
    <location>
        <position position="557"/>
    </location>
</feature>
<feature type="mutagenesis site" description="Abrogates microtubule severing." evidence="10">
    <original>G</original>
    <variation>A</variation>
    <variation>V</variation>
    <location>
        <position position="558"/>
    </location>
</feature>
<feature type="mutagenesis site" description="Abrogates microtubule severing." evidence="10">
    <original>D</original>
    <variation>A</variation>
    <variation>R</variation>
    <location>
        <position position="559"/>
    </location>
</feature>
<feature type="mutagenesis site" description="Impairs microtubule severing." evidence="10">
    <original>G</original>
    <variation>A</variation>
    <location>
        <position position="560"/>
    </location>
</feature>
<feature type="mutagenesis site" description="Abrogates microtubule severing." evidence="10">
    <original>G</original>
    <variation>V</variation>
    <location>
        <position position="560"/>
    </location>
</feature>
<feature type="mutagenesis site" description="Abrogates microtubule severing." evidence="10">
    <original>E</original>
    <variation>A</variation>
    <variation>R</variation>
    <location>
        <position position="561"/>
    </location>
</feature>
<feature type="mutagenesis site" description="Abrogates microtubule severing." evidence="10">
    <original>K</original>
    <variation>A</variation>
    <variation>R</variation>
    <location>
        <position position="562"/>
    </location>
</feature>
<feature type="mutagenesis site" description="Abrogates microtubule severing and ATPase activity." evidence="7 10">
    <original>E</original>
    <variation>A</variation>
    <location>
        <position position="583"/>
    </location>
</feature>
<feature type="mutagenesis site" description="Impairs interaction with microtubules and promotes hexamerization." evidence="7 10">
    <original>E</original>
    <variation>Q</variation>
    <location>
        <position position="583"/>
    </location>
</feature>
<feature type="mutagenesis site" description="Impairs microtubule severing." evidence="10">
    <original>S</original>
    <variation>Y</variation>
    <location>
        <position position="589"/>
    </location>
</feature>
<feature type="mutagenesis site" description="Abrogates microtubule severing." evidence="10">
    <original>R</original>
    <variation>A</variation>
    <variation>E</variation>
    <location>
        <position position="591"/>
    </location>
</feature>
<feature type="mutagenesis site" description="Impairs microtubule severing." evidence="10">
    <original>E</original>
    <variation>A</variation>
    <location>
        <position position="595"/>
    </location>
</feature>
<feature type="mutagenesis site" description="Abrogates microtubule severing." evidence="10">
    <original>E</original>
    <variation>R</variation>
    <location>
        <position position="595"/>
    </location>
</feature>
<feature type="mutagenesis site" description="Impairs microtubule severing." evidence="10">
    <original>H</original>
    <variation>A</variation>
    <location>
        <position position="596"/>
    </location>
</feature>
<feature type="mutagenesis site" description="Abrogates microtubule severing and impairs ATPase activity." evidence="10">
    <original>H</original>
    <variation>D</variation>
    <location>
        <position position="596"/>
    </location>
</feature>
<feature type="mutagenesis site" description="Abrogates microtubule severing." evidence="10">
    <original>H</original>
    <variation>Y</variation>
    <location>
        <position position="596"/>
    </location>
</feature>
<feature type="mutagenesis site" description="Impairs microtubule severing." evidence="10">
    <original>E</original>
    <variation>K</variation>
    <location>
        <position position="597"/>
    </location>
</feature>
<feature type="mutagenesis site" description="Abrogates microtubule severing." evidence="10">
    <original>A</original>
    <variation>L</variation>
    <location>
        <position position="598"/>
    </location>
</feature>
<feature type="mutagenesis site" description="Abrogates microtubule severing." evidence="10">
    <original>R</original>
    <variation>E</variation>
    <location>
        <position position="601"/>
    </location>
</feature>
<feature type="mutagenesis site" description="Abrogates microtubule severing and strongly impairs ATPase activity." evidence="10">
    <original>R</original>
    <variation>L</variation>
    <location>
        <position position="601"/>
    </location>
</feature>
<feature type="mutagenesis site" description="Abrogates microtubule severing." evidence="10">
    <original>P</original>
    <variation>L</variation>
    <location>
        <position position="631"/>
    </location>
</feature>
<feature type="mutagenesis site" description="Strongly impairs microtubule severing and weakly impairs ATPase activity." evidence="10">
    <original>Q</original>
    <variation>A</variation>
    <location>
        <position position="632"/>
    </location>
</feature>
<feature type="mutagenesis site" description="Weakly impairs microtubule severing and ATPase activity." evidence="10">
    <original>E</original>
    <variation>A</variation>
    <location>
        <position position="633"/>
    </location>
</feature>
<feature type="mutagenesis site" description="Impairs microtubule severing." evidence="10">
    <original>E</original>
    <variation>R</variation>
    <location>
        <position position="633"/>
    </location>
</feature>
<feature type="mutagenesis site" description="Weakly impairs microtubule severing and strongly impairs ATPase activity." evidence="7">
    <original>D</original>
    <variation>N</variation>
    <location>
        <position position="697"/>
    </location>
</feature>
<feature type="mutagenesis site" description="Abrogates microtubule severing." evidence="10">
    <original>R</original>
    <variation>Q</variation>
    <location>
        <position position="704"/>
    </location>
</feature>
<feature type="mutagenesis site" description="Strongly impairs microtubule severing and ATPase activity." evidence="10">
    <original>Y</original>
    <variation>A</variation>
    <location>
        <position position="753"/>
    </location>
</feature>
<feature type="sequence conflict" description="In Ref. 3; AAN71010/AAN71106." evidence="17" ref="3">
    <original>Q</original>
    <variation>E</variation>
    <location>
        <position position="665"/>
    </location>
</feature>
<feature type="helix" evidence="20">
    <location>
        <begin position="464"/>
        <end position="470"/>
    </location>
</feature>
<feature type="turn" evidence="20">
    <location>
        <begin position="471"/>
        <end position="473"/>
    </location>
</feature>
<feature type="helix" evidence="20">
    <location>
        <begin position="482"/>
        <end position="484"/>
    </location>
</feature>
<feature type="helix" evidence="20">
    <location>
        <begin position="489"/>
        <end position="498"/>
    </location>
</feature>
<feature type="helix" evidence="20">
    <location>
        <begin position="500"/>
        <end position="504"/>
    </location>
</feature>
<feature type="helix" evidence="20">
    <location>
        <begin position="506"/>
        <end position="508"/>
    </location>
</feature>
<feature type="helix" evidence="20">
    <location>
        <begin position="511"/>
        <end position="513"/>
    </location>
</feature>
<feature type="strand" evidence="20">
    <location>
        <begin position="517"/>
        <end position="528"/>
    </location>
</feature>
<feature type="helix" evidence="20">
    <location>
        <begin position="529"/>
        <end position="540"/>
    </location>
</feature>
<feature type="strand" evidence="20">
    <location>
        <begin position="543"/>
        <end position="547"/>
    </location>
</feature>
<feature type="helix" evidence="19">
    <location>
        <begin position="549"/>
        <end position="552"/>
    </location>
</feature>
<feature type="strand" evidence="18">
    <location>
        <begin position="553"/>
        <end position="556"/>
    </location>
</feature>
<feature type="helix" evidence="20">
    <location>
        <begin position="563"/>
        <end position="573"/>
    </location>
</feature>
<feature type="strand" evidence="20">
    <location>
        <begin position="576"/>
        <end position="581"/>
    </location>
</feature>
<feature type="helix" evidence="20">
    <location>
        <begin position="584"/>
        <end position="586"/>
    </location>
</feature>
<feature type="helix" evidence="20">
    <location>
        <begin position="602"/>
        <end position="610"/>
    </location>
</feature>
<feature type="strand" evidence="20">
    <location>
        <begin position="622"/>
        <end position="629"/>
    </location>
</feature>
<feature type="helix" evidence="20">
    <location>
        <begin position="631"/>
        <end position="633"/>
    </location>
</feature>
<feature type="helix" evidence="20">
    <location>
        <begin position="636"/>
        <end position="641"/>
    </location>
</feature>
<feature type="strand" evidence="20">
    <location>
        <begin position="644"/>
        <end position="647"/>
    </location>
</feature>
<feature type="helix" evidence="20">
    <location>
        <begin position="653"/>
        <end position="665"/>
    </location>
</feature>
<feature type="turn" evidence="20">
    <location>
        <begin position="666"/>
        <end position="668"/>
    </location>
</feature>
<feature type="helix" evidence="20">
    <location>
        <begin position="673"/>
        <end position="681"/>
    </location>
</feature>
<feature type="turn" evidence="20">
    <location>
        <begin position="682"/>
        <end position="685"/>
    </location>
</feature>
<feature type="helix" evidence="20">
    <location>
        <begin position="688"/>
        <end position="699"/>
    </location>
</feature>
<feature type="helix" evidence="20">
    <location>
        <begin position="701"/>
        <end position="704"/>
    </location>
</feature>
<feature type="helix" evidence="20">
    <location>
        <begin position="708"/>
        <end position="713"/>
    </location>
</feature>
<feature type="helix" evidence="20">
    <location>
        <begin position="716"/>
        <end position="718"/>
    </location>
</feature>
<feature type="helix" evidence="20">
    <location>
        <begin position="724"/>
        <end position="733"/>
    </location>
</feature>
<feature type="helix" evidence="20">
    <location>
        <begin position="740"/>
        <end position="753"/>
    </location>
</feature>
<dbReference type="EC" id="5.6.1.1" evidence="2 7 10"/>
<dbReference type="EMBL" id="AE014297">
    <property type="protein sequence ID" value="AAF56223.3"/>
    <property type="molecule type" value="Genomic_DNA"/>
</dbReference>
<dbReference type="EMBL" id="AE014297">
    <property type="protein sequence ID" value="AAN13975.2"/>
    <property type="molecule type" value="Genomic_DNA"/>
</dbReference>
<dbReference type="EMBL" id="AY069522">
    <property type="protein sequence ID" value="AAL39667.1"/>
    <property type="status" value="ALT_INIT"/>
    <property type="molecule type" value="mRNA"/>
</dbReference>
<dbReference type="EMBL" id="BT001254">
    <property type="protein sequence ID" value="AAN71010.1"/>
    <property type="molecule type" value="mRNA"/>
</dbReference>
<dbReference type="EMBL" id="BT001351">
    <property type="protein sequence ID" value="AAN71106.1"/>
    <property type="molecule type" value="mRNA"/>
</dbReference>
<dbReference type="EMBL" id="BT044258">
    <property type="protein sequence ID" value="ACH92323.1"/>
    <property type="molecule type" value="mRNA"/>
</dbReference>
<dbReference type="RefSeq" id="NP_001303438.1">
    <property type="nucleotide sequence ID" value="NM_001316509.1"/>
</dbReference>
<dbReference type="RefSeq" id="NP_651206.3">
    <property type="nucleotide sequence ID" value="NM_142949.4"/>
</dbReference>
<dbReference type="RefSeq" id="NP_732941.2">
    <property type="nucleotide sequence ID" value="NM_170115.3"/>
</dbReference>
<dbReference type="PDB" id="3B9P">
    <property type="method" value="X-ray"/>
    <property type="resolution" value="2.70 A"/>
    <property type="chains" value="A=463-758"/>
</dbReference>
<dbReference type="PDB" id="6NYV">
    <property type="method" value="X-ray"/>
    <property type="resolution" value="2.42 A"/>
    <property type="chains" value="B=445-758"/>
</dbReference>
<dbReference type="PDB" id="6NYW">
    <property type="method" value="X-ray"/>
    <property type="resolution" value="2.19 A"/>
    <property type="chains" value="B=445-758"/>
</dbReference>
<dbReference type="PDB" id="6P10">
    <property type="method" value="X-ray"/>
    <property type="resolution" value="2.30 A"/>
    <property type="chains" value="B=445-758"/>
</dbReference>
<dbReference type="PDB" id="6P11">
    <property type="method" value="X-ray"/>
    <property type="resolution" value="2.15 A"/>
    <property type="chains" value="B=445-758"/>
</dbReference>
<dbReference type="PDB" id="6P12">
    <property type="method" value="X-ray"/>
    <property type="resolution" value="1.94 A"/>
    <property type="chains" value="B=445-758"/>
</dbReference>
<dbReference type="PDB" id="6P13">
    <property type="method" value="X-ray"/>
    <property type="resolution" value="2.10 A"/>
    <property type="chains" value="B=445-758"/>
</dbReference>
<dbReference type="PDB" id="6P14">
    <property type="method" value="X-ray"/>
    <property type="resolution" value="1.93 A"/>
    <property type="chains" value="A=445-758"/>
</dbReference>
<dbReference type="PDBsum" id="3B9P"/>
<dbReference type="PDBsum" id="6NYV"/>
<dbReference type="PDBsum" id="6NYW"/>
<dbReference type="PDBsum" id="6P10"/>
<dbReference type="PDBsum" id="6P11"/>
<dbReference type="PDBsum" id="6P12"/>
<dbReference type="PDBsum" id="6P13"/>
<dbReference type="PDBsum" id="6P14"/>
<dbReference type="SMR" id="Q8I0P1"/>
<dbReference type="BioGRID" id="67781">
    <property type="interactions" value="7"/>
</dbReference>
<dbReference type="DIP" id="DIP-59834N"/>
<dbReference type="FunCoup" id="Q8I0P1">
    <property type="interactions" value="1638"/>
</dbReference>
<dbReference type="IntAct" id="Q8I0P1">
    <property type="interactions" value="4"/>
</dbReference>
<dbReference type="STRING" id="7227.FBpp0083918"/>
<dbReference type="BindingDB" id="Q8I0P1"/>
<dbReference type="ChEMBL" id="CHEMBL5169173"/>
<dbReference type="iPTMnet" id="Q8I0P1"/>
<dbReference type="PaxDb" id="7227-FBpp0083918"/>
<dbReference type="DNASU" id="42846"/>
<dbReference type="EnsemblMetazoa" id="FBtr0084533">
    <property type="protein sequence ID" value="FBpp0083918"/>
    <property type="gene ID" value="FBgn0039141"/>
</dbReference>
<dbReference type="EnsemblMetazoa" id="FBtr0084534">
    <property type="protein sequence ID" value="FBpp0083919"/>
    <property type="gene ID" value="FBgn0039141"/>
</dbReference>
<dbReference type="GeneID" id="42846"/>
<dbReference type="KEGG" id="dme:Dmel_CG5977"/>
<dbReference type="UCSC" id="CG5977-RA">
    <property type="organism name" value="d. melanogaster"/>
</dbReference>
<dbReference type="AGR" id="FB:FBgn0039141"/>
<dbReference type="CTD" id="42846"/>
<dbReference type="FlyBase" id="FBgn0039141">
    <property type="gene designation" value="spas"/>
</dbReference>
<dbReference type="VEuPathDB" id="VectorBase:FBgn0039141"/>
<dbReference type="eggNOG" id="KOG0740">
    <property type="taxonomic scope" value="Eukaryota"/>
</dbReference>
<dbReference type="GeneTree" id="ENSGT00940000156258"/>
<dbReference type="InParanoid" id="Q8I0P1"/>
<dbReference type="OMA" id="KSREPML"/>
<dbReference type="OrthoDB" id="10251136at2759"/>
<dbReference type="PhylomeDB" id="Q8I0P1"/>
<dbReference type="BRENDA" id="5.6.1.1">
    <property type="organism ID" value="1994"/>
</dbReference>
<dbReference type="Reactome" id="R-DME-9668328">
    <property type="pathway name" value="Sealing of the nuclear envelope (NE) by ESCRT-III"/>
</dbReference>
<dbReference type="BioGRID-ORCS" id="42846">
    <property type="hits" value="0 hits in 1 CRISPR screen"/>
</dbReference>
<dbReference type="CD-CODE" id="2838EF58">
    <property type="entry name" value="Centrosome"/>
</dbReference>
<dbReference type="EvolutionaryTrace" id="Q8I0P1"/>
<dbReference type="GenomeRNAi" id="42846"/>
<dbReference type="PRO" id="PR:Q8I0P1"/>
<dbReference type="Proteomes" id="UP000000803">
    <property type="component" value="Chromosome 3R"/>
</dbReference>
<dbReference type="Bgee" id="FBgn0039141">
    <property type="expression patterns" value="Expressed in outer photoreceptor cell (Drosophila) in insect head and 146 other cell types or tissues"/>
</dbReference>
<dbReference type="ExpressionAtlas" id="Q8I0P1">
    <property type="expression patterns" value="baseline and differential"/>
</dbReference>
<dbReference type="GO" id="GO:0005813">
    <property type="term" value="C:centrosome"/>
    <property type="evidence" value="ECO:0000314"/>
    <property type="project" value="UniProtKB"/>
</dbReference>
<dbReference type="GO" id="GO:0005694">
    <property type="term" value="C:chromosome"/>
    <property type="evidence" value="ECO:0000314"/>
    <property type="project" value="FlyBase"/>
</dbReference>
<dbReference type="GO" id="GO:0005737">
    <property type="term" value="C:cytoplasm"/>
    <property type="evidence" value="ECO:0000314"/>
    <property type="project" value="FlyBase"/>
</dbReference>
<dbReference type="GO" id="GO:0005811">
    <property type="term" value="C:lipid droplet"/>
    <property type="evidence" value="ECO:0007669"/>
    <property type="project" value="UniProtKB-SubCell"/>
</dbReference>
<dbReference type="GO" id="GO:0016020">
    <property type="term" value="C:membrane"/>
    <property type="evidence" value="ECO:0007669"/>
    <property type="project" value="UniProtKB-SubCell"/>
</dbReference>
<dbReference type="GO" id="GO:0005874">
    <property type="term" value="C:microtubule"/>
    <property type="evidence" value="ECO:0007669"/>
    <property type="project" value="UniProtKB-UniRule"/>
</dbReference>
<dbReference type="GO" id="GO:0015630">
    <property type="term" value="C:microtubule cytoskeleton"/>
    <property type="evidence" value="ECO:0000314"/>
    <property type="project" value="UniProtKB"/>
</dbReference>
<dbReference type="GO" id="GO:0031594">
    <property type="term" value="C:neuromuscular junction"/>
    <property type="evidence" value="ECO:0000314"/>
    <property type="project" value="FlyBase"/>
</dbReference>
<dbReference type="GO" id="GO:0005819">
    <property type="term" value="C:spindle"/>
    <property type="evidence" value="ECO:0007669"/>
    <property type="project" value="UniProtKB-UniRule"/>
</dbReference>
<dbReference type="GO" id="GO:0043195">
    <property type="term" value="C:terminal bouton"/>
    <property type="evidence" value="ECO:0000314"/>
    <property type="project" value="FlyBase"/>
</dbReference>
<dbReference type="GO" id="GO:0043014">
    <property type="term" value="F:alpha-tubulin binding"/>
    <property type="evidence" value="ECO:0000303"/>
    <property type="project" value="UniProtKB"/>
</dbReference>
<dbReference type="GO" id="GO:0005524">
    <property type="term" value="F:ATP binding"/>
    <property type="evidence" value="ECO:0007669"/>
    <property type="project" value="UniProtKB-UniRule"/>
</dbReference>
<dbReference type="GO" id="GO:0016887">
    <property type="term" value="F:ATP hydrolysis activity"/>
    <property type="evidence" value="ECO:0000318"/>
    <property type="project" value="GO_Central"/>
</dbReference>
<dbReference type="GO" id="GO:0008017">
    <property type="term" value="F:microtubule binding"/>
    <property type="evidence" value="ECO:0000314"/>
    <property type="project" value="FlyBase"/>
</dbReference>
<dbReference type="GO" id="GO:0008568">
    <property type="term" value="F:microtubule severing ATPase activity"/>
    <property type="evidence" value="ECO:0000314"/>
    <property type="project" value="FlyBase"/>
</dbReference>
<dbReference type="GO" id="GO:0008344">
    <property type="term" value="P:adult locomotory behavior"/>
    <property type="evidence" value="ECO:0007669"/>
    <property type="project" value="UniProtKB-UniRule"/>
</dbReference>
<dbReference type="GO" id="GO:0051301">
    <property type="term" value="P:cell division"/>
    <property type="evidence" value="ECO:0007669"/>
    <property type="project" value="UniProtKB-KW"/>
</dbReference>
<dbReference type="GO" id="GO:0035099">
    <property type="term" value="P:hemocyte migration"/>
    <property type="evidence" value="ECO:0000315"/>
    <property type="project" value="FlyBase"/>
</dbReference>
<dbReference type="GO" id="GO:0007626">
    <property type="term" value="P:locomotory behavior"/>
    <property type="evidence" value="ECO:0000315"/>
    <property type="project" value="FlyBase"/>
</dbReference>
<dbReference type="GO" id="GO:0000226">
    <property type="term" value="P:microtubule cytoskeleton organization"/>
    <property type="evidence" value="ECO:0000315"/>
    <property type="project" value="FlyBase"/>
</dbReference>
<dbReference type="GO" id="GO:0051013">
    <property type="term" value="P:microtubule severing"/>
    <property type="evidence" value="ECO:0000314"/>
    <property type="project" value="FlyBase"/>
</dbReference>
<dbReference type="GO" id="GO:0007079">
    <property type="term" value="P:mitotic chromosome movement towards spindle pole"/>
    <property type="evidence" value="ECO:0007669"/>
    <property type="project" value="UniProtKB-UniRule"/>
</dbReference>
<dbReference type="GO" id="GO:0000070">
    <property type="term" value="P:mitotic sister chromatid segregation"/>
    <property type="evidence" value="ECO:0000315"/>
    <property type="project" value="FlyBase"/>
</dbReference>
<dbReference type="GO" id="GO:0000022">
    <property type="term" value="P:mitotic spindle elongation"/>
    <property type="evidence" value="ECO:0007669"/>
    <property type="project" value="UniProtKB-UniRule"/>
</dbReference>
<dbReference type="GO" id="GO:0007026">
    <property type="term" value="P:negative regulation of microtubule depolymerization"/>
    <property type="evidence" value="ECO:0000314"/>
    <property type="project" value="FlyBase"/>
</dbReference>
<dbReference type="GO" id="GO:1900074">
    <property type="term" value="P:negative regulation of neuromuscular synaptic transmission"/>
    <property type="evidence" value="ECO:0000315"/>
    <property type="project" value="FlyBase"/>
</dbReference>
<dbReference type="GO" id="GO:0045886">
    <property type="term" value="P:negative regulation of synaptic assembly at neuromuscular junction"/>
    <property type="evidence" value="ECO:0000315"/>
    <property type="project" value="FlyBase"/>
</dbReference>
<dbReference type="GO" id="GO:0007399">
    <property type="term" value="P:nervous system development"/>
    <property type="evidence" value="ECO:0007669"/>
    <property type="project" value="UniProtKB-KW"/>
</dbReference>
<dbReference type="GO" id="GO:0048691">
    <property type="term" value="P:positive regulation of axon extension involved in regeneration"/>
    <property type="evidence" value="ECO:0000316"/>
    <property type="project" value="FlyBase"/>
</dbReference>
<dbReference type="GO" id="GO:0050775">
    <property type="term" value="P:positive regulation of dendrite morphogenesis"/>
    <property type="evidence" value="ECO:0000315"/>
    <property type="project" value="FlyBase"/>
</dbReference>
<dbReference type="GO" id="GO:0045834">
    <property type="term" value="P:positive regulation of lipid metabolic process"/>
    <property type="evidence" value="ECO:0000315"/>
    <property type="project" value="FlyBase"/>
</dbReference>
<dbReference type="GO" id="GO:0031117">
    <property type="term" value="P:positive regulation of microtubule depolymerization"/>
    <property type="evidence" value="ECO:0000314"/>
    <property type="project" value="UniProtKB"/>
</dbReference>
<dbReference type="GO" id="GO:1900075">
    <property type="term" value="P:positive regulation of neuromuscular synaptic transmission"/>
    <property type="evidence" value="ECO:0000315"/>
    <property type="project" value="FlyBase"/>
</dbReference>
<dbReference type="GO" id="GO:0045887">
    <property type="term" value="P:positive regulation of synaptic assembly at neuromuscular junction"/>
    <property type="evidence" value="ECO:0000315"/>
    <property type="project" value="FlyBase"/>
</dbReference>
<dbReference type="GO" id="GO:0034214">
    <property type="term" value="P:protein hexamerization"/>
    <property type="evidence" value="ECO:0007669"/>
    <property type="project" value="UniProtKB-UniRule"/>
</dbReference>
<dbReference type="GO" id="GO:2000331">
    <property type="term" value="P:regulation of terminal button organization"/>
    <property type="evidence" value="ECO:0000315"/>
    <property type="project" value="FlyBase"/>
</dbReference>
<dbReference type="CDD" id="cd02679">
    <property type="entry name" value="MIT_spastin"/>
    <property type="match status" value="1"/>
</dbReference>
<dbReference type="CDD" id="cd19524">
    <property type="entry name" value="RecA-like_spastin"/>
    <property type="match status" value="1"/>
</dbReference>
<dbReference type="FunFam" id="3.40.50.300:FF:000093">
    <property type="entry name" value="Fidgetin-like 1"/>
    <property type="match status" value="1"/>
</dbReference>
<dbReference type="FunFam" id="1.10.8.60:FF:000036">
    <property type="entry name" value="Spastin"/>
    <property type="match status" value="1"/>
</dbReference>
<dbReference type="FunFam" id="1.20.58.80:FF:000006">
    <property type="entry name" value="Spastin"/>
    <property type="match status" value="1"/>
</dbReference>
<dbReference type="Gene3D" id="1.10.8.60">
    <property type="match status" value="1"/>
</dbReference>
<dbReference type="Gene3D" id="3.40.50.300">
    <property type="entry name" value="P-loop containing nucleotide triphosphate hydrolases"/>
    <property type="match status" value="1"/>
</dbReference>
<dbReference type="Gene3D" id="1.20.58.80">
    <property type="entry name" value="Phosphotransferase system, lactose/cellobiose-type IIA subunit"/>
    <property type="match status" value="1"/>
</dbReference>
<dbReference type="HAMAP" id="MF_03021">
    <property type="entry name" value="Spastin"/>
    <property type="match status" value="1"/>
</dbReference>
<dbReference type="InterPro" id="IPR003593">
    <property type="entry name" value="AAA+_ATPase"/>
</dbReference>
<dbReference type="InterPro" id="IPR041569">
    <property type="entry name" value="AAA_lid_3"/>
</dbReference>
<dbReference type="InterPro" id="IPR003959">
    <property type="entry name" value="ATPase_AAA_core"/>
</dbReference>
<dbReference type="InterPro" id="IPR003960">
    <property type="entry name" value="ATPase_AAA_CS"/>
</dbReference>
<dbReference type="InterPro" id="IPR007330">
    <property type="entry name" value="MIT_dom"/>
</dbReference>
<dbReference type="InterPro" id="IPR050304">
    <property type="entry name" value="MT-severing_AAA_ATPase"/>
</dbReference>
<dbReference type="InterPro" id="IPR027417">
    <property type="entry name" value="P-loop_NTPase"/>
</dbReference>
<dbReference type="InterPro" id="IPR015415">
    <property type="entry name" value="Spast_Vps4_C"/>
</dbReference>
<dbReference type="InterPro" id="IPR017179">
    <property type="entry name" value="Spastin"/>
</dbReference>
<dbReference type="PANTHER" id="PTHR23074">
    <property type="entry name" value="AAA DOMAIN-CONTAINING"/>
    <property type="match status" value="1"/>
</dbReference>
<dbReference type="PANTHER" id="PTHR23074:SF86">
    <property type="entry name" value="SPASTIN"/>
    <property type="match status" value="1"/>
</dbReference>
<dbReference type="Pfam" id="PF00004">
    <property type="entry name" value="AAA"/>
    <property type="match status" value="1"/>
</dbReference>
<dbReference type="Pfam" id="PF17862">
    <property type="entry name" value="AAA_lid_3"/>
    <property type="match status" value="1"/>
</dbReference>
<dbReference type="Pfam" id="PF09336">
    <property type="entry name" value="Vps4_C"/>
    <property type="match status" value="1"/>
</dbReference>
<dbReference type="SMART" id="SM00382">
    <property type="entry name" value="AAA"/>
    <property type="match status" value="1"/>
</dbReference>
<dbReference type="SMART" id="SM00745">
    <property type="entry name" value="MIT"/>
    <property type="match status" value="1"/>
</dbReference>
<dbReference type="SUPFAM" id="SSF52540">
    <property type="entry name" value="P-loop containing nucleoside triphosphate hydrolases"/>
    <property type="match status" value="1"/>
</dbReference>
<dbReference type="PROSITE" id="PS00674">
    <property type="entry name" value="AAA"/>
    <property type="match status" value="1"/>
</dbReference>
<name>SPAST_DROME</name>
<keyword id="KW-0002">3D-structure</keyword>
<keyword id="KW-0067">ATP-binding</keyword>
<keyword id="KW-0131">Cell cycle</keyword>
<keyword id="KW-0132">Cell division</keyword>
<keyword id="KW-0158">Chromosome</keyword>
<keyword id="KW-0963">Cytoplasm</keyword>
<keyword id="KW-0206">Cytoskeleton</keyword>
<keyword id="KW-0217">Developmental protein</keyword>
<keyword id="KW-0221">Differentiation</keyword>
<keyword id="KW-0413">Isomerase</keyword>
<keyword id="KW-0551">Lipid droplet</keyword>
<keyword id="KW-0472">Membrane</keyword>
<keyword id="KW-0493">Microtubule</keyword>
<keyword id="KW-0498">Mitosis</keyword>
<keyword id="KW-0524">Neurogenesis</keyword>
<keyword id="KW-0547">Nucleotide-binding</keyword>
<keyword id="KW-0597">Phosphoprotein</keyword>
<keyword id="KW-1185">Reference proteome</keyword>
<proteinExistence type="evidence at protein level"/>
<organism>
    <name type="scientific">Drosophila melanogaster</name>
    <name type="common">Fruit fly</name>
    <dbReference type="NCBI Taxonomy" id="7227"/>
    <lineage>
        <taxon>Eukaryota</taxon>
        <taxon>Metazoa</taxon>
        <taxon>Ecdysozoa</taxon>
        <taxon>Arthropoda</taxon>
        <taxon>Hexapoda</taxon>
        <taxon>Insecta</taxon>
        <taxon>Pterygota</taxon>
        <taxon>Neoptera</taxon>
        <taxon>Endopterygota</taxon>
        <taxon>Diptera</taxon>
        <taxon>Brachycera</taxon>
        <taxon>Muscomorpha</taxon>
        <taxon>Ephydroidea</taxon>
        <taxon>Drosophilidae</taxon>
        <taxon>Drosophila</taxon>
        <taxon>Sophophora</taxon>
    </lineage>
</organism>
<reference key="1">
    <citation type="journal article" date="2000" name="Science">
        <title>The genome sequence of Drosophila melanogaster.</title>
        <authorList>
            <person name="Adams M.D."/>
            <person name="Celniker S.E."/>
            <person name="Holt R.A."/>
            <person name="Evans C.A."/>
            <person name="Gocayne J.D."/>
            <person name="Amanatides P.G."/>
            <person name="Scherer S.E."/>
            <person name="Li P.W."/>
            <person name="Hoskins R.A."/>
            <person name="Galle R.F."/>
            <person name="George R.A."/>
            <person name="Lewis S.E."/>
            <person name="Richards S."/>
            <person name="Ashburner M."/>
            <person name="Henderson S.N."/>
            <person name="Sutton G.G."/>
            <person name="Wortman J.R."/>
            <person name="Yandell M.D."/>
            <person name="Zhang Q."/>
            <person name="Chen L.X."/>
            <person name="Brandon R.C."/>
            <person name="Rogers Y.-H.C."/>
            <person name="Blazej R.G."/>
            <person name="Champe M."/>
            <person name="Pfeiffer B.D."/>
            <person name="Wan K.H."/>
            <person name="Doyle C."/>
            <person name="Baxter E.G."/>
            <person name="Helt G."/>
            <person name="Nelson C.R."/>
            <person name="Miklos G.L.G."/>
            <person name="Abril J.F."/>
            <person name="Agbayani A."/>
            <person name="An H.-J."/>
            <person name="Andrews-Pfannkoch C."/>
            <person name="Baldwin D."/>
            <person name="Ballew R.M."/>
            <person name="Basu A."/>
            <person name="Baxendale J."/>
            <person name="Bayraktaroglu L."/>
            <person name="Beasley E.M."/>
            <person name="Beeson K.Y."/>
            <person name="Benos P.V."/>
            <person name="Berman B.P."/>
            <person name="Bhandari D."/>
            <person name="Bolshakov S."/>
            <person name="Borkova D."/>
            <person name="Botchan M.R."/>
            <person name="Bouck J."/>
            <person name="Brokstein P."/>
            <person name="Brottier P."/>
            <person name="Burtis K.C."/>
            <person name="Busam D.A."/>
            <person name="Butler H."/>
            <person name="Cadieu E."/>
            <person name="Center A."/>
            <person name="Chandra I."/>
            <person name="Cherry J.M."/>
            <person name="Cawley S."/>
            <person name="Dahlke C."/>
            <person name="Davenport L.B."/>
            <person name="Davies P."/>
            <person name="de Pablos B."/>
            <person name="Delcher A."/>
            <person name="Deng Z."/>
            <person name="Mays A.D."/>
            <person name="Dew I."/>
            <person name="Dietz S.M."/>
            <person name="Dodson K."/>
            <person name="Doup L.E."/>
            <person name="Downes M."/>
            <person name="Dugan-Rocha S."/>
            <person name="Dunkov B.C."/>
            <person name="Dunn P."/>
            <person name="Durbin K.J."/>
            <person name="Evangelista C.C."/>
            <person name="Ferraz C."/>
            <person name="Ferriera S."/>
            <person name="Fleischmann W."/>
            <person name="Fosler C."/>
            <person name="Gabrielian A.E."/>
            <person name="Garg N.S."/>
            <person name="Gelbart W.M."/>
            <person name="Glasser K."/>
            <person name="Glodek A."/>
            <person name="Gong F."/>
            <person name="Gorrell J.H."/>
            <person name="Gu Z."/>
            <person name="Guan P."/>
            <person name="Harris M."/>
            <person name="Harris N.L."/>
            <person name="Harvey D.A."/>
            <person name="Heiman T.J."/>
            <person name="Hernandez J.R."/>
            <person name="Houck J."/>
            <person name="Hostin D."/>
            <person name="Houston K.A."/>
            <person name="Howland T.J."/>
            <person name="Wei M.-H."/>
            <person name="Ibegwam C."/>
            <person name="Jalali M."/>
            <person name="Kalush F."/>
            <person name="Karpen G.H."/>
            <person name="Ke Z."/>
            <person name="Kennison J.A."/>
            <person name="Ketchum K.A."/>
            <person name="Kimmel B.E."/>
            <person name="Kodira C.D."/>
            <person name="Kraft C.L."/>
            <person name="Kravitz S."/>
            <person name="Kulp D."/>
            <person name="Lai Z."/>
            <person name="Lasko P."/>
            <person name="Lei Y."/>
            <person name="Levitsky A.A."/>
            <person name="Li J.H."/>
            <person name="Li Z."/>
            <person name="Liang Y."/>
            <person name="Lin X."/>
            <person name="Liu X."/>
            <person name="Mattei B."/>
            <person name="McIntosh T.C."/>
            <person name="McLeod M.P."/>
            <person name="McPherson D."/>
            <person name="Merkulov G."/>
            <person name="Milshina N.V."/>
            <person name="Mobarry C."/>
            <person name="Morris J."/>
            <person name="Moshrefi A."/>
            <person name="Mount S.M."/>
            <person name="Moy M."/>
            <person name="Murphy B."/>
            <person name="Murphy L."/>
            <person name="Muzny D.M."/>
            <person name="Nelson D.L."/>
            <person name="Nelson D.R."/>
            <person name="Nelson K.A."/>
            <person name="Nixon K."/>
            <person name="Nusskern D.R."/>
            <person name="Pacleb J.M."/>
            <person name="Palazzolo M."/>
            <person name="Pittman G.S."/>
            <person name="Pan S."/>
            <person name="Pollard J."/>
            <person name="Puri V."/>
            <person name="Reese M.G."/>
            <person name="Reinert K."/>
            <person name="Remington K."/>
            <person name="Saunders R.D.C."/>
            <person name="Scheeler F."/>
            <person name="Shen H."/>
            <person name="Shue B.C."/>
            <person name="Siden-Kiamos I."/>
            <person name="Simpson M."/>
            <person name="Skupski M.P."/>
            <person name="Smith T.J."/>
            <person name="Spier E."/>
            <person name="Spradling A.C."/>
            <person name="Stapleton M."/>
            <person name="Strong R."/>
            <person name="Sun E."/>
            <person name="Svirskas R."/>
            <person name="Tector C."/>
            <person name="Turner R."/>
            <person name="Venter E."/>
            <person name="Wang A.H."/>
            <person name="Wang X."/>
            <person name="Wang Z.-Y."/>
            <person name="Wassarman D.A."/>
            <person name="Weinstock G.M."/>
            <person name="Weissenbach J."/>
            <person name="Williams S.M."/>
            <person name="Woodage T."/>
            <person name="Worley K.C."/>
            <person name="Wu D."/>
            <person name="Yang S."/>
            <person name="Yao Q.A."/>
            <person name="Ye J."/>
            <person name="Yeh R.-F."/>
            <person name="Zaveri J.S."/>
            <person name="Zhan M."/>
            <person name="Zhang G."/>
            <person name="Zhao Q."/>
            <person name="Zheng L."/>
            <person name="Zheng X.H."/>
            <person name="Zhong F.N."/>
            <person name="Zhong W."/>
            <person name="Zhou X."/>
            <person name="Zhu S.C."/>
            <person name="Zhu X."/>
            <person name="Smith H.O."/>
            <person name="Gibbs R.A."/>
            <person name="Myers E.W."/>
            <person name="Rubin G.M."/>
            <person name="Venter J.C."/>
        </authorList>
    </citation>
    <scope>NUCLEOTIDE SEQUENCE [LARGE SCALE GENOMIC DNA]</scope>
    <source>
        <strain>Berkeley</strain>
    </source>
</reference>
<reference key="2">
    <citation type="journal article" date="2002" name="Genome Biol.">
        <title>Annotation of the Drosophila melanogaster euchromatic genome: a systematic review.</title>
        <authorList>
            <person name="Misra S."/>
            <person name="Crosby M.A."/>
            <person name="Mungall C.J."/>
            <person name="Matthews B.B."/>
            <person name="Campbell K.S."/>
            <person name="Hradecky P."/>
            <person name="Huang Y."/>
            <person name="Kaminker J.S."/>
            <person name="Millburn G.H."/>
            <person name="Prochnik S.E."/>
            <person name="Smith C.D."/>
            <person name="Tupy J.L."/>
            <person name="Whitfield E.J."/>
            <person name="Bayraktaroglu L."/>
            <person name="Berman B.P."/>
            <person name="Bettencourt B.R."/>
            <person name="Celniker S.E."/>
            <person name="de Grey A.D.N.J."/>
            <person name="Drysdale R.A."/>
            <person name="Harris N.L."/>
            <person name="Richter J."/>
            <person name="Russo S."/>
            <person name="Schroeder A.J."/>
            <person name="Shu S.Q."/>
            <person name="Stapleton M."/>
            <person name="Yamada C."/>
            <person name="Ashburner M."/>
            <person name="Gelbart W.M."/>
            <person name="Rubin G.M."/>
            <person name="Lewis S.E."/>
        </authorList>
    </citation>
    <scope>GENOME REANNOTATION</scope>
    <source>
        <strain>Berkeley</strain>
    </source>
</reference>
<reference key="3">
    <citation type="journal article" date="2002" name="Genome Biol.">
        <title>A Drosophila full-length cDNA resource.</title>
        <authorList>
            <person name="Stapleton M."/>
            <person name="Carlson J.W."/>
            <person name="Brokstein P."/>
            <person name="Yu C."/>
            <person name="Champe M."/>
            <person name="George R.A."/>
            <person name="Guarin H."/>
            <person name="Kronmiller B."/>
            <person name="Pacleb J.M."/>
            <person name="Park S."/>
            <person name="Wan K.H."/>
            <person name="Rubin G.M."/>
            <person name="Celniker S.E."/>
        </authorList>
    </citation>
    <scope>NUCLEOTIDE SEQUENCE [LARGE SCALE MRNA]</scope>
    <source>
        <strain>Berkeley</strain>
        <tissue>Testis</tissue>
    </source>
</reference>
<reference key="4">
    <citation type="submission" date="2008-09" db="EMBL/GenBank/DDBJ databases">
        <authorList>
            <person name="Carlson J.W."/>
            <person name="Booth B."/>
            <person name="Frise E."/>
            <person name="Park S."/>
            <person name="Wan K.H."/>
            <person name="Yu C."/>
            <person name="Celniker S.E."/>
        </authorList>
    </citation>
    <scope>NUCLEOTIDE SEQUENCE [LARGE SCALE MRNA]</scope>
</reference>
<reference key="5">
    <citation type="journal article" date="2003" name="Dev. Genes Evol.">
        <title>Identification of the Drosophila melanogaster homolog of the human spastin gene.</title>
        <authorList>
            <person name="Kammermeier L."/>
            <person name="Spring J."/>
            <person name="Stierwald M."/>
            <person name="Burgunder J.-M."/>
            <person name="Reichert H."/>
        </authorList>
    </citation>
    <scope>IDENTIFICATION</scope>
    <scope>DEVELOPMENTAL STAGE</scope>
</reference>
<reference key="6">
    <citation type="journal article" date="2004" name="Curr. Biol.">
        <title>The hereditary spastic paraplegia gene, spastin, regulates microtubule stability to modulate synaptic structure and function.</title>
        <authorList>
            <person name="Trotta N."/>
            <person name="Orso G."/>
            <person name="Rossetto M.G."/>
            <person name="Daga A."/>
            <person name="Broadie K."/>
        </authorList>
    </citation>
    <scope>FUNCTION</scope>
    <scope>DEVELOPMENTAL STAGE</scope>
    <scope>DISRUPTION PHENOTYPE</scope>
</reference>
<reference key="7">
    <citation type="journal article" date="2004" name="PLoS Biol.">
        <title>Drosophila spastin regulates synaptic microtubule networks and is required for normal motor function.</title>
        <authorList>
            <person name="Sherwood N.T."/>
            <person name="Sun Q."/>
            <person name="Xue M."/>
            <person name="Zhang B."/>
            <person name="Zinn K."/>
        </authorList>
    </citation>
    <scope>FUNCTION</scope>
    <scope>SUBCELLULAR LOCATION</scope>
    <scope>DISRUPTION PHENOTYPE</scope>
</reference>
<reference key="8">
    <citation type="journal article" date="2005" name="Curr. Biol.">
        <title>The Drosophila homologue of the hereditary spastic paraplegia protein, spastin, severs and disassembles microtubules.</title>
        <authorList>
            <person name="Roll-Mecak A."/>
            <person name="Vale R.D."/>
        </authorList>
    </citation>
    <scope>FUNCTION</scope>
    <scope>CATALYTIC ACTIVITY</scope>
    <scope>INTERACTION WITH MICROTUBULES</scope>
    <scope>SUBCELLULAR LOCATION</scope>
    <scope>MUTAGENESIS OF SER-503; LYS-529; GLU-583 AND ASP-697</scope>
</reference>
<reference key="9">
    <citation type="journal article" date="2005" name="J. Clin. Invest.">
        <title>Disease-related phenotypes in a Drosophila model of hereditary spastic paraplegia are ameliorated by treatment with vinblastine.</title>
        <authorList>
            <person name="Orso G."/>
            <person name="Martinuzzi A."/>
            <person name="Rossetto M.G."/>
            <person name="Sartori E."/>
            <person name="Feany M."/>
            <person name="Daga A."/>
        </authorList>
    </citation>
    <scope>FUNCTION</scope>
    <scope>DISRUPTION PHENOTYPE</scope>
    <scope>MUTAGENESIS OF LYS-529</scope>
</reference>
<reference key="10">
    <citation type="journal article" date="2007" name="J. Cell Biol.">
        <title>Three microtubule severing enzymes contribute to the 'Pacman-flux' machinery that moves chromosomes.</title>
        <authorList>
            <person name="Zhang D."/>
            <person name="Rogers G.C."/>
            <person name="Buster D.W."/>
            <person name="Sharp D.J."/>
        </authorList>
    </citation>
    <scope>FUNCTION</scope>
    <scope>SUBCELLULAR LOCATION</scope>
</reference>
<reference key="11">
    <citation type="journal article" date="2008" name="J. Proteome Res.">
        <title>Phosphoproteome analysis of Drosophila melanogaster embryos.</title>
        <authorList>
            <person name="Zhai B."/>
            <person name="Villen J."/>
            <person name="Beausoleil S.A."/>
            <person name="Mintseris J."/>
            <person name="Gygi S.P."/>
        </authorList>
    </citation>
    <scope>PHOSPHORYLATION [LARGE SCALE ANALYSIS] AT THR-439</scope>
    <scope>IDENTIFICATION BY MASS SPECTROMETRY</scope>
    <source>
        <tissue>Embryo</tissue>
    </source>
</reference>
<reference key="12">
    <citation type="journal article" date="2009" name="Dev. Biol.">
        <title>Drosophila Atlastin regulates the stability of muscle microtubules and is required for synapse development.</title>
        <authorList>
            <person name="Lee M."/>
            <person name="Paik S.K."/>
            <person name="Lee M.-J."/>
            <person name="Kim Y.-J."/>
            <person name="Kim S."/>
            <person name="Nahm M."/>
            <person name="Oh S.-J."/>
            <person name="Kim H.-M."/>
            <person name="Yim J."/>
            <person name="Lee C.J."/>
            <person name="Bae Y.C."/>
            <person name="Lee S."/>
        </authorList>
    </citation>
    <scope>FUNCTION</scope>
    <scope>INTERACTION WITH ATL</scope>
</reference>
<reference key="13">
    <citation type="journal article" date="2012" name="Cell Rep.">
        <title>Normal spastin gene dosage is specifically required for axon regeneration.</title>
        <authorList>
            <person name="Stone M.C."/>
            <person name="Rao K."/>
            <person name="Gheres K.W."/>
            <person name="Kim S."/>
            <person name="Tao J."/>
            <person name="La Rochelle C."/>
            <person name="Folker C.T."/>
            <person name="Sherwood N.T."/>
            <person name="Rolls M.M."/>
        </authorList>
    </citation>
    <scope>FUNCTION</scope>
</reference>
<reference key="14">
    <citation type="journal article" date="2015" name="PLoS Genet.">
        <title>Spastin binds to lipid droplets and affects lipid metabolism.</title>
        <authorList>
            <person name="Papadopoulos C."/>
            <person name="Orso G."/>
            <person name="Mancuso G."/>
            <person name="Herholz M."/>
            <person name="Gumeni S."/>
            <person name="Tadepalle N."/>
            <person name="Juengst C."/>
            <person name="Tzschichholz A."/>
            <person name="Schauss A."/>
            <person name="Hoening S."/>
            <person name="Trifunovic A."/>
            <person name="Daga A."/>
            <person name="Rugarli E.I."/>
        </authorList>
    </citation>
    <scope>FUNCTION</scope>
    <scope>SUBCELLULAR LOCATION</scope>
    <scope>MUTAGENESIS OF LYS-529</scope>
</reference>
<reference key="15">
    <citation type="journal article" date="2016" name="Hum. Mol. Genet.">
        <title>Conserved pharmacological rescue of hereditary spastic paraplegia-related phenotypes across model organisms.</title>
        <authorList>
            <person name="Julien C."/>
            <person name="Lissouba A."/>
            <person name="Madabattula S."/>
            <person name="Fardghassemi Y."/>
            <person name="Rosenfelt C."/>
            <person name="Androschuk A."/>
            <person name="Strautman J."/>
            <person name="Wong C."/>
            <person name="Bysice A."/>
            <person name="O'sullivan J."/>
            <person name="Rouleau G.A."/>
            <person name="Drapeau P."/>
            <person name="Parker J.A."/>
            <person name="Bolduc F.V."/>
        </authorList>
    </citation>
    <scope>DISRUPTION PHENOTYPE</scope>
</reference>
<reference key="16">
    <citation type="journal article" date="2008" name="Nature">
        <title>Structural basis of microtubule severing by the hereditary spastic paraplegia protein spastin.</title>
        <authorList>
            <person name="Roll-Mecak A."/>
            <person name="Vale R.D."/>
        </authorList>
    </citation>
    <scope>X-RAY CRYSTALLOGRAPHY (2.7 ANGSTROMS) OF 463-758</scope>
    <scope>FUNCTION</scope>
    <scope>CATALYTIC ACTIVITY</scope>
    <scope>HOMOHEXAMERIZATION</scope>
    <scope>INTERACTION WITH MICROTUBULES</scope>
    <scope>SUBCELLULAR LOCATION</scope>
    <scope>MUTAGENESIS OF LEU-465; ILE-469; ASP-471; GLU-472; ILE-473; VAL-474; GLY-511; LYS-555; TYR-556; VAL-557; GLY-558; ASP-559; GLY-560; GLU-561; LYS-562; GLU-583; SER-589; ARG-591; GLU-595; HIS-596; GLU-597; ALA-598; ARG-601; PRO-631; GLN-632; GLU-633; ARG-704 AND TYR-753</scope>
</reference>
<comment type="function">
    <text evidence="2 5 6 7 8 9 10 12 13 14">ATP-dependent microtubule severing protein. Stimulates microtubule minus-end depolymerization and poleward microtubule flux in the mitotic spindle (PubMed:15242610, PubMed:15562320, PubMed:15823537, PubMed:16276413, PubMed:17452528, PubMed:18202664, PubMed:19341724, PubMed:25875445). Regulates microtubule stability in the neuromuscular junction synapse (PubMed:15242610, PubMed:15562320, PubMed:19341724). Involved in lipid metabolism by regulating the size and distribution of lipid droplets (PubMed:25875445). Involved in axon regeneration by regulating microtubule severing (PubMed:23122959).</text>
</comment>
<comment type="catalytic activity">
    <reaction evidence="2 7 10">
        <text>n ATP + n H2O + a microtubule = n ADP + n phosphate + (n+1) alpha/beta tubulin heterodimers.</text>
        <dbReference type="EC" id="5.6.1.1"/>
    </reaction>
</comment>
<comment type="subunit">
    <text evidence="2 7 10 12">Homohexamer. The homohexamer is stabilized by ATP-binding. The homohexamer may adopt a ring conformation through which microtubules pass prior to being severed (PubMed:18202664). Interacts with microtubules (PubMed:15823537, PubMed:18202664). Interacts with atl; may be involved in microtubule dynamics (PubMed:19341724).</text>
</comment>
<comment type="subcellular location">
    <subcellularLocation>
        <location evidence="2">Membrane</location>
        <topology evidence="2">Peripheral membrane protein</topology>
    </subcellularLocation>
    <subcellularLocation>
        <location evidence="2 9">Cytoplasm</location>
        <location evidence="2 9">Cytoskeleton</location>
        <location evidence="2 9">Microtubule organizing center</location>
        <location evidence="2 9">Centrosome</location>
    </subcellularLocation>
    <subcellularLocation>
        <location evidence="2 6 7 9 10">Cytoplasm</location>
        <location evidence="2 6 7 9 10">Cytoskeleton</location>
    </subcellularLocation>
    <subcellularLocation>
        <location evidence="2 9">Chromosome</location>
    </subcellularLocation>
    <subcellularLocation>
        <location evidence="2 14">Lipid droplet</location>
    </subcellularLocation>
    <text evidence="2 7 9">Forms a intramembrane hairpin-like structure in the membrane (By similarity). Colocalizes with cellular microtubule arrays. Localizes to chromosomes from prometaphase/metaphase to anaphase, and this requires microtubules (PubMed:17452528). Localizes to discrete punctate cytoplasmic foci which may correspond to secretory vesicles (PubMed:15823537).</text>
</comment>
<comment type="developmental stage">
    <text evidence="4 5">Maternally expressed in early embryogenesis with high expression until blastoderm. At the cell formation stage, strongly expressed near the basal part of the cell layer underlying the surface. During germband extension and stomodeal plate formation, expressed in the ventral head and trunk ectoderm, as well as in cells near the cephalic furrow and in the invaginating hindgut and midgut primordia. After germband retraction and delamination of neuroblasts at stage 13, expressed in subsets of cells in all neuromeres of the CNS including those of the supraesophageal and subesophageal ganglia. In later embryonic stages expressed in cell clusters throughout the supraesophageal ganglion, with pronounced expression also seen in the subesophageal ganglion. In the ventral nerve cord (VNC), expressed in two broad longitudinal stripes located laterally, and weakly expressed in some midline cells. Also expressed in some sensory head organs of the peripheral nervous system (PNS), most probably the Bolwigs organs and/or the dorsal organs. Expressed in the developing larval neuromusculature, muscles and neuronal axons. Enriched in neuromuscular junctions throughout the muscles of the body wall. Enriched in punctate domains of synaptic boutons and excluded from interbouton axonal connections. Colocalizes with the synaptic vesicle pools.</text>
</comment>
<comment type="disruption phenotype">
    <text evidence="5 6 8 15">Loss of protein expression throughout the embryo leads to pupal lethality. Loss of protein expression specifically in the nervous system causes synaptic undergrowth and a reduction in total synaptic area. Neuromuscular junction boutons are smaller and more numerous. Microtubule stability appears to be enhanced within neuronal axons and at neuromuscular junctions and synaptic currents are increased. Older flies exhibit numerous vacuoles in the neuropil and cortex. Adult coordination and locomotory behavior are compromised and lifespan is reduced. RNAi-mediated knockdown results in climbing defects, which can be rescued following exposure to the drugs methylene blue, phenazine, or N-acetyl-L-cysteine (PubMed:26744324). RNAi-mediated knockdown results in increased oxidative stress, which can be rescued following exposure to the drug methylene blue (PubMed:26744324).</text>
</comment>
<comment type="similarity">
    <text evidence="2">Belongs to the AAA ATPase family. Spastin subfamily.</text>
</comment>
<comment type="sequence caution" evidence="17">
    <conflict type="erroneous initiation">
        <sequence resource="EMBL-CDS" id="AAL39667"/>
    </conflict>
</comment>
<protein>
    <recommendedName>
        <fullName evidence="2">Spastin</fullName>
        <ecNumber evidence="2 7 10">5.6.1.1</ecNumber>
    </recommendedName>
    <alternativeName>
        <fullName>D-Spastin</fullName>
    </alternativeName>
    <alternativeName>
        <fullName>Dm-Spastin</fullName>
    </alternativeName>
    <alternativeName>
        <fullName evidence="16">Dspastin</fullName>
    </alternativeName>
</protein>
<gene>
    <name evidence="2" type="primary">spas</name>
    <name type="ORF">CG5977</name>
</gene>
<accession>Q8I0P1</accession>
<accession>Q8IMX5</accession>
<accession>Q8T066</accession>
<sequence>MVRTKNQSSSSSASSSSTKSPIKSSSGAGSSGGGLGGRQSTHRSSSASNVAAVVAGGSSAAGGGSSSNRRSPGSSPDGDDDTTTTDDLTPTTCSPRSGHHHSYGGYSSSVHKQNLYVVSFPIIFLFNVLRSLIYQLFCIFRYLYGASTKVIYRPHRRDCNIEIVVQNSSKEQQQSLNHPSELNREGDGQEQQLSNQPQRFRPIQPLEMAANRPGGGYSPGPGDPLLAKQKHHHRRAFEYISKALKIDEENEGHKELAIELYRKGIKELEDGIAVDCWSGRGDVWDRAQRLHDKMQTNLSMARDRLHFLALREQDLQMQRLSLKEKQKEEAQSKPQKTREPMLAGMTNEPMKLRVRSSGYGPKATTSAQPTASGRKLTIGSKRPVNLAVANKSQTLPRNLGSKTSVGAVQRQPAKTAATPPAVRRQFSSGRNTPPQRSRTPINNNGPSGSGASTPVVSVKGVEQKLVQLILDEIVEGGAKVEWTDIAGQDVAKQALQEMVILPSVRPELFTGLRAPAKGLLLFGPPGNGKTLLARAVATECSATFLNISAASLTSKYVGDGEKLVRALFAVARHMQPSIIFIDEVDSLLSERSSSEHEASRRLKTEFLVEFDGLPGNPDGDRIVVLAATNRPQELDEAALRRFTKRVYVSLPDEQTRELLLNRLLQKQGSPLDTEALRRLAKITDGYSGSDLTALAKDAALEPIRELNVEQVKCLDISAMRAITEQDFHSSLKRIRRSVAPQSLNSYEKWSQDYGDITI</sequence>
<evidence type="ECO:0000255" key="1"/>
<evidence type="ECO:0000255" key="2">
    <source>
        <dbReference type="HAMAP-Rule" id="MF_03021"/>
    </source>
</evidence>
<evidence type="ECO:0000256" key="3">
    <source>
        <dbReference type="SAM" id="MobiDB-lite"/>
    </source>
</evidence>
<evidence type="ECO:0000269" key="4">
    <source>
    </source>
</evidence>
<evidence type="ECO:0000269" key="5">
    <source>
    </source>
</evidence>
<evidence type="ECO:0000269" key="6">
    <source>
    </source>
</evidence>
<evidence type="ECO:0000269" key="7">
    <source>
    </source>
</evidence>
<evidence type="ECO:0000269" key="8">
    <source>
    </source>
</evidence>
<evidence type="ECO:0000269" key="9">
    <source>
    </source>
</evidence>
<evidence type="ECO:0000269" key="10">
    <source>
    </source>
</evidence>
<evidence type="ECO:0000269" key="11">
    <source>
    </source>
</evidence>
<evidence type="ECO:0000269" key="12">
    <source>
    </source>
</evidence>
<evidence type="ECO:0000269" key="13">
    <source>
    </source>
</evidence>
<evidence type="ECO:0000269" key="14">
    <source>
    </source>
</evidence>
<evidence type="ECO:0000269" key="15">
    <source>
    </source>
</evidence>
<evidence type="ECO:0000303" key="16">
    <source>
    </source>
</evidence>
<evidence type="ECO:0000305" key="17"/>
<evidence type="ECO:0007829" key="18">
    <source>
        <dbReference type="PDB" id="3B9P"/>
    </source>
</evidence>
<evidence type="ECO:0007829" key="19">
    <source>
        <dbReference type="PDB" id="6P12"/>
    </source>
</evidence>
<evidence type="ECO:0007829" key="20">
    <source>
        <dbReference type="PDB" id="6P14"/>
    </source>
</evidence>